<comment type="function">
    <text evidence="3 5 11">Meiosis-specific telomere-associated protein involved in meiotic telomere attachment to the nucleus inner membrane, a crucial step for homologous pairing and synapsis (PubMed:24413433, PubMed:24885367, PubMed:26548954). Component of the MAJIN-TERB1-TERB2 complex, which promotes telomere cap exchange by mediating attachment of telomeric DNA to the inner nuclear membrane and replacement of the protective cap of telomeric chromosomes: in early meiosis, the MAJIN-TERB1-TERB2 complex associates with telomeric DNA and the shelterin/telosome complex. During prophase, the complex matures and promotes release of the shelterin/telosome complex from telomeric DNA (PubMed:26548954). In the MAJIN-TERB1-TERB2 complex, TERB1 probably mediates association with the shelterin/telosome complex via interaction with TERF1, promoting priming telomeric DNA attachment' (PubMed:26548954). Promotes telomere association with the nuclear envelope and deposition of the SUN-KASH/LINC complex (PubMed:24413433, PubMed:24885367). Also recruits cohesin to telomeres to develop structural rigidity (PubMed:24413433).</text>
</comment>
<comment type="subunit">
    <text evidence="3 5">Component of the MAJIN-TERB1-TERB2 complex, composed of MAJIN, TERB1 and TERB2 (PubMed:26548954). Interacts with TERF1, STAG3 and SUN1 (PubMed:24413433). Interacts (via Myb-like domain) with the cohesin complex; probably mediated via interaction with STAG3 (PubMed:24413433).</text>
</comment>
<comment type="interaction">
    <interactant intactId="EBI-11707325">
        <id>Q8C0V1</id>
    </interactant>
    <interactant intactId="EBI-6752574">
        <id>Q9D666</id>
        <label>Sun1</label>
    </interactant>
    <organismsDiffer>false</organismsDiffer>
    <experiments>2</experiments>
</comment>
<comment type="interaction">
    <interactant intactId="EBI-16089839">
        <id>Q8C0V1-1</id>
    </interactant>
    <interactant intactId="EBI-6919183">
        <id>P70371</id>
        <label>Terf1</label>
    </interactant>
    <organismsDiffer>false</organismsDiffer>
    <experiments>4</experiments>
</comment>
<comment type="subcellular location">
    <subcellularLocation>
        <location evidence="3 4">Chromosome</location>
        <location evidence="3 4">Telomere</location>
    </subcellularLocation>
    <subcellularLocation>
        <location evidence="5">Nucleus inner membrane</location>
    </subcellularLocation>
    <text evidence="3 5">Localizes to telomeres during meiotic prophase (PubMed:24413433). In leptotene spermatocytes, localizes to telomeres that localize to the nucleus inner membrane (PubMed:26548954).</text>
</comment>
<comment type="alternative products">
    <event type="alternative splicing"/>
    <isoform>
        <id>Q8C0V1-1</id>
        <name>1</name>
        <sequence type="displayed"/>
    </isoform>
    <isoform>
        <id>Q8C0V1-2</id>
        <name>2</name>
        <sequence type="described" ref="VSP_031617 VSP_031623"/>
    </isoform>
    <isoform>
        <id>Q8C0V1-3</id>
        <name>3</name>
        <sequence type="described" ref="VSP_031616 VSP_031618 VSP_031620 VSP_031622"/>
    </isoform>
    <isoform>
        <id>Q8C0V1-4</id>
        <name>4</name>
        <sequence type="described" ref="VSP_031616 VSP_031618 VSP_031619 VSP_031621"/>
    </isoform>
</comment>
<comment type="tissue specificity">
    <text evidence="3">Expressed in testis and fetal oocytes.</text>
</comment>
<comment type="developmental stage">
    <text evidence="3 4">Expressed during meiotic prophase and becomes undetectable in metaphase I in spermatocytes and oocytes (at protein level).</text>
</comment>
<comment type="PTM">
    <text evidence="3 5">Phosphorylated by CDK (PubMed:24413433, PubMed:26548954). Phosphorylation by CDK takes place in late prophase when the cap exchange is prominent (PubMed:26548954). is important for the stabilization of telomere attachment but dispenable for the cap exchange (PubMed:26548954).</text>
</comment>
<comment type="disruption phenotype">
    <text evidence="3">Mice develop normally, exhibit no overt phenotype, but are infertile (both males and females). Testis lack postmeiotic cells due to massive elimination of spermatocytes, while females show degeneration of the ovaries, lacking growing follicles and mature oocytes.</text>
</comment>
<comment type="similarity">
    <text evidence="9">Belongs to the TERB1 family.</text>
</comment>
<accession>Q8C0V1</accession>
<accession>A1L2Z9</accession>
<accession>E9QPF2</accession>
<accession>Q14CI1</accession>
<accession>Q8C0N5</accession>
<dbReference type="EMBL" id="AK029754">
    <property type="protein sequence ID" value="BAC26599.1"/>
    <property type="molecule type" value="mRNA"/>
</dbReference>
<dbReference type="EMBL" id="AK030157">
    <property type="protein sequence ID" value="BAC26814.1"/>
    <property type="molecule type" value="mRNA"/>
</dbReference>
<dbReference type="EMBL" id="AC130543">
    <property type="status" value="NOT_ANNOTATED_CDS"/>
    <property type="molecule type" value="Genomic_DNA"/>
</dbReference>
<dbReference type="EMBL" id="BC113771">
    <property type="protein sequence ID" value="AAI13772.1"/>
    <property type="molecule type" value="mRNA"/>
</dbReference>
<dbReference type="EMBL" id="BC129814">
    <property type="protein sequence ID" value="AAI29815.1"/>
    <property type="molecule type" value="mRNA"/>
</dbReference>
<dbReference type="CCDS" id="CCDS22580.1">
    <molecule id="Q8C0V1-1"/>
</dbReference>
<dbReference type="RefSeq" id="NP_851289.2">
    <molecule id="Q8C0V1-1"/>
    <property type="nucleotide sequence ID" value="NM_180958.3"/>
</dbReference>
<dbReference type="RefSeq" id="XP_006531157.1">
    <molecule id="Q8C0V1-1"/>
    <property type="nucleotide sequence ID" value="XM_006531094.4"/>
</dbReference>
<dbReference type="RefSeq" id="XP_017168345.1">
    <molecule id="Q8C0V1-1"/>
    <property type="nucleotide sequence ID" value="XM_017312856.2"/>
</dbReference>
<dbReference type="PDB" id="1X58">
    <property type="method" value="NMR"/>
    <property type="chains" value="A=712-760"/>
</dbReference>
<dbReference type="PDBsum" id="1X58"/>
<dbReference type="SMR" id="Q8C0V1"/>
<dbReference type="CORUM" id="Q8C0V1"/>
<dbReference type="DIP" id="DIP-60728N"/>
<dbReference type="FunCoup" id="Q8C0V1">
    <property type="interactions" value="51"/>
</dbReference>
<dbReference type="IntAct" id="Q8C0V1">
    <property type="interactions" value="8"/>
</dbReference>
<dbReference type="STRING" id="10090.ENSMUSP00000067324"/>
<dbReference type="iPTMnet" id="Q8C0V1"/>
<dbReference type="PhosphoSitePlus" id="Q8C0V1"/>
<dbReference type="jPOST" id="Q8C0V1"/>
<dbReference type="PaxDb" id="10090-ENSMUSP00000067324"/>
<dbReference type="ProteomicsDB" id="262753">
    <molecule id="Q8C0V1-1"/>
</dbReference>
<dbReference type="ProteomicsDB" id="262754">
    <molecule id="Q8C0V1-2"/>
</dbReference>
<dbReference type="ProteomicsDB" id="262755">
    <molecule id="Q8C0V1-3"/>
</dbReference>
<dbReference type="ProteomicsDB" id="262756">
    <molecule id="Q8C0V1-4"/>
</dbReference>
<dbReference type="Antibodypedia" id="72088">
    <property type="antibodies" value="44 antibodies from 9 providers"/>
</dbReference>
<dbReference type="DNASU" id="320022"/>
<dbReference type="Ensembl" id="ENSMUST00000064576.8">
    <molecule id="Q8C0V1-1"/>
    <property type="protein sequence ID" value="ENSMUSP00000067324.2"/>
    <property type="gene ID" value="ENSMUSG00000052616.11"/>
</dbReference>
<dbReference type="GeneID" id="320022"/>
<dbReference type="KEGG" id="mmu:320022"/>
<dbReference type="UCSC" id="uc009naq.1">
    <molecule id="Q8C0V1-1"/>
    <property type="organism name" value="mouse"/>
</dbReference>
<dbReference type="UCSC" id="uc009nar.1">
    <molecule id="Q8C0V1-2"/>
    <property type="organism name" value="mouse"/>
</dbReference>
<dbReference type="AGR" id="MGI:2443187"/>
<dbReference type="CTD" id="283847"/>
<dbReference type="MGI" id="MGI:2443187">
    <property type="gene designation" value="Terb1"/>
</dbReference>
<dbReference type="VEuPathDB" id="HostDB:ENSMUSG00000052616"/>
<dbReference type="eggNOG" id="ENOG502QQER">
    <property type="taxonomic scope" value="Eukaryota"/>
</dbReference>
<dbReference type="GeneTree" id="ENSGT00390000005075"/>
<dbReference type="InParanoid" id="Q8C0V1"/>
<dbReference type="OMA" id="ECLKHQM"/>
<dbReference type="OrthoDB" id="608866at2759"/>
<dbReference type="PhylomeDB" id="Q8C0V1"/>
<dbReference type="TreeFam" id="TF335845"/>
<dbReference type="BioGRID-ORCS" id="320022">
    <property type="hits" value="0 hits in 80 CRISPR screens"/>
</dbReference>
<dbReference type="ChiTaRS" id="Terb1">
    <property type="organism name" value="mouse"/>
</dbReference>
<dbReference type="EvolutionaryTrace" id="Q8C0V1"/>
<dbReference type="PRO" id="PR:Q8C0V1"/>
<dbReference type="Proteomes" id="UP000000589">
    <property type="component" value="Chromosome 8"/>
</dbReference>
<dbReference type="RNAct" id="Q8C0V1">
    <property type="molecule type" value="protein"/>
</dbReference>
<dbReference type="Bgee" id="ENSMUSG00000052616">
    <property type="expression patterns" value="Expressed in spermatocyte and 52 other cell types or tissues"/>
</dbReference>
<dbReference type="ExpressionAtlas" id="Q8C0V1">
    <property type="expression patterns" value="baseline and differential"/>
</dbReference>
<dbReference type="GO" id="GO:0000781">
    <property type="term" value="C:chromosome, telomeric region"/>
    <property type="evidence" value="ECO:0000314"/>
    <property type="project" value="UniProtKB"/>
</dbReference>
<dbReference type="GO" id="GO:0005635">
    <property type="term" value="C:nuclear envelope"/>
    <property type="evidence" value="ECO:0000314"/>
    <property type="project" value="MGI"/>
</dbReference>
<dbReference type="GO" id="GO:0005637">
    <property type="term" value="C:nuclear inner membrane"/>
    <property type="evidence" value="ECO:0000314"/>
    <property type="project" value="UniProtKB"/>
</dbReference>
<dbReference type="GO" id="GO:1990918">
    <property type="term" value="P:double-strand break repair involved in meiotic recombination"/>
    <property type="evidence" value="ECO:0000316"/>
    <property type="project" value="MGI"/>
</dbReference>
<dbReference type="GO" id="GO:0007129">
    <property type="term" value="P:homologous chromosome pairing at meiosis"/>
    <property type="evidence" value="ECO:0000315"/>
    <property type="project" value="UniProtKB"/>
</dbReference>
<dbReference type="GO" id="GO:0070197">
    <property type="term" value="P:meiotic attachment of telomere to nuclear envelope"/>
    <property type="evidence" value="ECO:0000315"/>
    <property type="project" value="UniProtKB"/>
</dbReference>
<dbReference type="GO" id="GO:0045141">
    <property type="term" value="P:meiotic telomere clustering"/>
    <property type="evidence" value="ECO:0000315"/>
    <property type="project" value="UniProtKB"/>
</dbReference>
<dbReference type="CDD" id="cd11658">
    <property type="entry name" value="SANT_DMAP1_like"/>
    <property type="match status" value="1"/>
</dbReference>
<dbReference type="FunFam" id="1.10.10.60:FF:000569">
    <property type="entry name" value="telomere repeats-binding bouquet formation protein 1"/>
    <property type="match status" value="1"/>
</dbReference>
<dbReference type="Gene3D" id="1.10.10.60">
    <property type="entry name" value="Homeodomain-like"/>
    <property type="match status" value="1"/>
</dbReference>
<dbReference type="Gene3D" id="1.25.10.10">
    <property type="entry name" value="Leucine-rich Repeat Variant"/>
    <property type="match status" value="2"/>
</dbReference>
<dbReference type="InterPro" id="IPR011989">
    <property type="entry name" value="ARM-like"/>
</dbReference>
<dbReference type="InterPro" id="IPR016024">
    <property type="entry name" value="ARM-type_fold"/>
</dbReference>
<dbReference type="InterPro" id="IPR000225">
    <property type="entry name" value="Armadillo"/>
</dbReference>
<dbReference type="InterPro" id="IPR009057">
    <property type="entry name" value="Homeodomain-like_sf"/>
</dbReference>
<dbReference type="InterPro" id="IPR001005">
    <property type="entry name" value="SANT/Myb"/>
</dbReference>
<dbReference type="InterPro" id="IPR042359">
    <property type="entry name" value="TERB1"/>
</dbReference>
<dbReference type="PANTHER" id="PTHR14014">
    <property type="entry name" value="TELOMERE REPEATS-BINDING BOUQUET FORMATION PROTEIN 1"/>
    <property type="match status" value="1"/>
</dbReference>
<dbReference type="PANTHER" id="PTHR14014:SF0">
    <property type="entry name" value="TELOMERE REPEATS-BINDING BOUQUET FORMATION PROTEIN 1"/>
    <property type="match status" value="1"/>
</dbReference>
<dbReference type="SMART" id="SM00717">
    <property type="entry name" value="SANT"/>
    <property type="match status" value="1"/>
</dbReference>
<dbReference type="SUPFAM" id="SSF48371">
    <property type="entry name" value="ARM repeat"/>
    <property type="match status" value="1"/>
</dbReference>
<dbReference type="SUPFAM" id="SSF46689">
    <property type="entry name" value="Homeodomain-like"/>
    <property type="match status" value="1"/>
</dbReference>
<dbReference type="PROSITE" id="PS50176">
    <property type="entry name" value="ARM_REPEAT"/>
    <property type="match status" value="1"/>
</dbReference>
<feature type="chain" id="PRO_0000320157" description="Telomere repeats-binding bouquet formation protein 1">
    <location>
        <begin position="1"/>
        <end position="768"/>
    </location>
</feature>
<feature type="repeat" description="ARM 1">
    <location>
        <begin position="101"/>
        <end position="145"/>
    </location>
</feature>
<feature type="repeat" description="ARM 2">
    <location>
        <begin position="341"/>
        <end position="384"/>
    </location>
</feature>
<feature type="domain" description="Myb-like">
    <location>
        <begin position="707"/>
        <end position="760"/>
    </location>
</feature>
<feature type="region of interest" description="Disordered" evidence="2">
    <location>
        <begin position="422"/>
        <end position="441"/>
    </location>
</feature>
<feature type="region of interest" description="Disordered" evidence="2">
    <location>
        <begin position="454"/>
        <end position="475"/>
    </location>
</feature>
<feature type="region of interest" description="Interaction with TERF1" evidence="3">
    <location>
        <begin position="524"/>
        <end position="700"/>
    </location>
</feature>
<feature type="coiled-coil region" evidence="1">
    <location>
        <begin position="399"/>
        <end position="448"/>
    </location>
</feature>
<feature type="compositionally biased region" description="Basic and acidic residues" evidence="2">
    <location>
        <begin position="422"/>
        <end position="436"/>
    </location>
</feature>
<feature type="compositionally biased region" description="Basic and acidic residues" evidence="2">
    <location>
        <begin position="461"/>
        <end position="475"/>
    </location>
</feature>
<feature type="modified residue" description="Phosphothreonine" evidence="5 10">
    <location>
        <position position="648"/>
    </location>
</feature>
<feature type="splice variant" id="VSP_031616" description="In isoform 3 and isoform 4." evidence="6">
    <location>
        <begin position="1"/>
        <end position="401"/>
    </location>
</feature>
<feature type="splice variant" id="VSP_031617" description="In isoform 2." evidence="7">
    <original>MESEKPKKTQEMKTDLKLLLECLKYHMGNPLSQKEVLITIHSVCKQNS</original>
    <variation>MSEVSHGQPFVTKG</variation>
    <location>
        <begin position="1"/>
        <end position="48"/>
    </location>
</feature>
<feature type="splice variant" id="VSP_031618" description="In isoform 3 and isoform 4." evidence="6">
    <original>REHWKAAKEILCRIKQFEKGGKE</original>
    <variation>MKVLIQEKNLASYLPLVTAQRIV</variation>
    <location>
        <begin position="402"/>
        <end position="424"/>
    </location>
</feature>
<feature type="splice variant" id="VSP_031619" description="In isoform 4." evidence="6">
    <original>GCIVARKLLNSRNFSKFLHSCAYQCVHHKVIMEAEDKYKNELRKTFICAKKILLTPC</original>
    <variation>VCLYSYVGGFSYIEPPLHLARARLARKNDAATGSFCTRLLGELDCRGEKTSSPELVA</variation>
    <location>
        <begin position="594"/>
        <end position="650"/>
    </location>
</feature>
<feature type="splice variant" id="VSP_031620" description="In isoform 3." evidence="6">
    <original>KILLTPCR</original>
    <variation>SNSFSNFN</variation>
    <location>
        <begin position="644"/>
        <end position="651"/>
    </location>
</feature>
<feature type="splice variant" id="VSP_031621" description="In isoform 4." evidence="6">
    <location>
        <begin position="651"/>
        <end position="768"/>
    </location>
</feature>
<feature type="splice variant" id="VSP_031622" description="In isoform 3." evidence="6">
    <location>
        <begin position="652"/>
        <end position="768"/>
    </location>
</feature>
<feature type="splice variant" id="VSP_031623" description="In isoform 2." evidence="7">
    <original>KKRRIRKDFTKEEVNYLFHGVKTMGNHWNSILWSFPFQKGRRAVDLAHKYHRLIKGPSCAAL</original>
    <variation>SEFEATPGYIGKAHLKKRKRKKKENLQTSFSMM</variation>
    <location>
        <begin position="707"/>
        <end position="768"/>
    </location>
</feature>
<feature type="mutagenesis site" description="Telomere-attachment defects." evidence="5">
    <original>T</original>
    <variation>A</variation>
    <location>
        <position position="648"/>
    </location>
</feature>
<feature type="mutagenesis site" description="Mimics phosphorylation state; impairs interaction with TERF1." evidence="3">
    <original>T</original>
    <variation>D</variation>
    <location>
        <position position="648"/>
    </location>
</feature>
<feature type="sequence conflict" description="In Ref. 1; BAC26599." evidence="9" ref="1">
    <original>L</original>
    <variation>V</variation>
    <location>
        <position position="211"/>
    </location>
</feature>
<feature type="strand" evidence="13">
    <location>
        <begin position="712"/>
        <end position="714"/>
    </location>
</feature>
<feature type="helix" evidence="13">
    <location>
        <begin position="717"/>
        <end position="730"/>
    </location>
</feature>
<feature type="helix" evidence="13">
    <location>
        <begin position="734"/>
        <end position="740"/>
    </location>
</feature>
<feature type="helix" evidence="13">
    <location>
        <begin position="749"/>
        <end position="760"/>
    </location>
</feature>
<organism>
    <name type="scientific">Mus musculus</name>
    <name type="common">Mouse</name>
    <dbReference type="NCBI Taxonomy" id="10090"/>
    <lineage>
        <taxon>Eukaryota</taxon>
        <taxon>Metazoa</taxon>
        <taxon>Chordata</taxon>
        <taxon>Craniata</taxon>
        <taxon>Vertebrata</taxon>
        <taxon>Euteleostomi</taxon>
        <taxon>Mammalia</taxon>
        <taxon>Eutheria</taxon>
        <taxon>Euarchontoglires</taxon>
        <taxon>Glires</taxon>
        <taxon>Rodentia</taxon>
        <taxon>Myomorpha</taxon>
        <taxon>Muroidea</taxon>
        <taxon>Muridae</taxon>
        <taxon>Murinae</taxon>
        <taxon>Mus</taxon>
        <taxon>Mus</taxon>
    </lineage>
</organism>
<reference key="1">
    <citation type="journal article" date="2005" name="Science">
        <title>The transcriptional landscape of the mammalian genome.</title>
        <authorList>
            <person name="Carninci P."/>
            <person name="Kasukawa T."/>
            <person name="Katayama S."/>
            <person name="Gough J."/>
            <person name="Frith M.C."/>
            <person name="Maeda N."/>
            <person name="Oyama R."/>
            <person name="Ravasi T."/>
            <person name="Lenhard B."/>
            <person name="Wells C."/>
            <person name="Kodzius R."/>
            <person name="Shimokawa K."/>
            <person name="Bajic V.B."/>
            <person name="Brenner S.E."/>
            <person name="Batalov S."/>
            <person name="Forrest A.R."/>
            <person name="Zavolan M."/>
            <person name="Davis M.J."/>
            <person name="Wilming L.G."/>
            <person name="Aidinis V."/>
            <person name="Allen J.E."/>
            <person name="Ambesi-Impiombato A."/>
            <person name="Apweiler R."/>
            <person name="Aturaliya R.N."/>
            <person name="Bailey T.L."/>
            <person name="Bansal M."/>
            <person name="Baxter L."/>
            <person name="Beisel K.W."/>
            <person name="Bersano T."/>
            <person name="Bono H."/>
            <person name="Chalk A.M."/>
            <person name="Chiu K.P."/>
            <person name="Choudhary V."/>
            <person name="Christoffels A."/>
            <person name="Clutterbuck D.R."/>
            <person name="Crowe M.L."/>
            <person name="Dalla E."/>
            <person name="Dalrymple B.P."/>
            <person name="de Bono B."/>
            <person name="Della Gatta G."/>
            <person name="di Bernardo D."/>
            <person name="Down T."/>
            <person name="Engstrom P."/>
            <person name="Fagiolini M."/>
            <person name="Faulkner G."/>
            <person name="Fletcher C.F."/>
            <person name="Fukushima T."/>
            <person name="Furuno M."/>
            <person name="Futaki S."/>
            <person name="Gariboldi M."/>
            <person name="Georgii-Hemming P."/>
            <person name="Gingeras T.R."/>
            <person name="Gojobori T."/>
            <person name="Green R.E."/>
            <person name="Gustincich S."/>
            <person name="Harbers M."/>
            <person name="Hayashi Y."/>
            <person name="Hensch T.K."/>
            <person name="Hirokawa N."/>
            <person name="Hill D."/>
            <person name="Huminiecki L."/>
            <person name="Iacono M."/>
            <person name="Ikeo K."/>
            <person name="Iwama A."/>
            <person name="Ishikawa T."/>
            <person name="Jakt M."/>
            <person name="Kanapin A."/>
            <person name="Katoh M."/>
            <person name="Kawasawa Y."/>
            <person name="Kelso J."/>
            <person name="Kitamura H."/>
            <person name="Kitano H."/>
            <person name="Kollias G."/>
            <person name="Krishnan S.P."/>
            <person name="Kruger A."/>
            <person name="Kummerfeld S.K."/>
            <person name="Kurochkin I.V."/>
            <person name="Lareau L.F."/>
            <person name="Lazarevic D."/>
            <person name="Lipovich L."/>
            <person name="Liu J."/>
            <person name="Liuni S."/>
            <person name="McWilliam S."/>
            <person name="Madan Babu M."/>
            <person name="Madera M."/>
            <person name="Marchionni L."/>
            <person name="Matsuda H."/>
            <person name="Matsuzawa S."/>
            <person name="Miki H."/>
            <person name="Mignone F."/>
            <person name="Miyake S."/>
            <person name="Morris K."/>
            <person name="Mottagui-Tabar S."/>
            <person name="Mulder N."/>
            <person name="Nakano N."/>
            <person name="Nakauchi H."/>
            <person name="Ng P."/>
            <person name="Nilsson R."/>
            <person name="Nishiguchi S."/>
            <person name="Nishikawa S."/>
            <person name="Nori F."/>
            <person name="Ohara O."/>
            <person name="Okazaki Y."/>
            <person name="Orlando V."/>
            <person name="Pang K.C."/>
            <person name="Pavan W.J."/>
            <person name="Pavesi G."/>
            <person name="Pesole G."/>
            <person name="Petrovsky N."/>
            <person name="Piazza S."/>
            <person name="Reed J."/>
            <person name="Reid J.F."/>
            <person name="Ring B.Z."/>
            <person name="Ringwald M."/>
            <person name="Rost B."/>
            <person name="Ruan Y."/>
            <person name="Salzberg S.L."/>
            <person name="Sandelin A."/>
            <person name="Schneider C."/>
            <person name="Schoenbach C."/>
            <person name="Sekiguchi K."/>
            <person name="Semple C.A."/>
            <person name="Seno S."/>
            <person name="Sessa L."/>
            <person name="Sheng Y."/>
            <person name="Shibata Y."/>
            <person name="Shimada H."/>
            <person name="Shimada K."/>
            <person name="Silva D."/>
            <person name="Sinclair B."/>
            <person name="Sperling S."/>
            <person name="Stupka E."/>
            <person name="Sugiura K."/>
            <person name="Sultana R."/>
            <person name="Takenaka Y."/>
            <person name="Taki K."/>
            <person name="Tammoja K."/>
            <person name="Tan S.L."/>
            <person name="Tang S."/>
            <person name="Taylor M.S."/>
            <person name="Tegner J."/>
            <person name="Teichmann S.A."/>
            <person name="Ueda H.R."/>
            <person name="van Nimwegen E."/>
            <person name="Verardo R."/>
            <person name="Wei C.L."/>
            <person name="Yagi K."/>
            <person name="Yamanishi H."/>
            <person name="Zabarovsky E."/>
            <person name="Zhu S."/>
            <person name="Zimmer A."/>
            <person name="Hide W."/>
            <person name="Bult C."/>
            <person name="Grimmond S.M."/>
            <person name="Teasdale R.D."/>
            <person name="Liu E.T."/>
            <person name="Brusic V."/>
            <person name="Quackenbush J."/>
            <person name="Wahlestedt C."/>
            <person name="Mattick J.S."/>
            <person name="Hume D.A."/>
            <person name="Kai C."/>
            <person name="Sasaki D."/>
            <person name="Tomaru Y."/>
            <person name="Fukuda S."/>
            <person name="Kanamori-Katayama M."/>
            <person name="Suzuki M."/>
            <person name="Aoki J."/>
            <person name="Arakawa T."/>
            <person name="Iida J."/>
            <person name="Imamura K."/>
            <person name="Itoh M."/>
            <person name="Kato T."/>
            <person name="Kawaji H."/>
            <person name="Kawagashira N."/>
            <person name="Kawashima T."/>
            <person name="Kojima M."/>
            <person name="Kondo S."/>
            <person name="Konno H."/>
            <person name="Nakano K."/>
            <person name="Ninomiya N."/>
            <person name="Nishio T."/>
            <person name="Okada M."/>
            <person name="Plessy C."/>
            <person name="Shibata K."/>
            <person name="Shiraki T."/>
            <person name="Suzuki S."/>
            <person name="Tagami M."/>
            <person name="Waki K."/>
            <person name="Watahiki A."/>
            <person name="Okamura-Oho Y."/>
            <person name="Suzuki H."/>
            <person name="Kawai J."/>
            <person name="Hayashizaki Y."/>
        </authorList>
    </citation>
    <scope>NUCLEOTIDE SEQUENCE [LARGE SCALE MRNA] (ISOFORMS 1 AND 2)</scope>
    <source>
        <strain>C57BL/6J</strain>
        <tissue>Testis</tissue>
    </source>
</reference>
<reference key="2">
    <citation type="journal article" date="2009" name="PLoS Biol.">
        <title>Lineage-specific biology revealed by a finished genome assembly of the mouse.</title>
        <authorList>
            <person name="Church D.M."/>
            <person name="Goodstadt L."/>
            <person name="Hillier L.W."/>
            <person name="Zody M.C."/>
            <person name="Goldstein S."/>
            <person name="She X."/>
            <person name="Bult C.J."/>
            <person name="Agarwala R."/>
            <person name="Cherry J.L."/>
            <person name="DiCuccio M."/>
            <person name="Hlavina W."/>
            <person name="Kapustin Y."/>
            <person name="Meric P."/>
            <person name="Maglott D."/>
            <person name="Birtle Z."/>
            <person name="Marques A.C."/>
            <person name="Graves T."/>
            <person name="Zhou S."/>
            <person name="Teague B."/>
            <person name="Potamousis K."/>
            <person name="Churas C."/>
            <person name="Place M."/>
            <person name="Herschleb J."/>
            <person name="Runnheim R."/>
            <person name="Forrest D."/>
            <person name="Amos-Landgraf J."/>
            <person name="Schwartz D.C."/>
            <person name="Cheng Z."/>
            <person name="Lindblad-Toh K."/>
            <person name="Eichler E.E."/>
            <person name="Ponting C.P."/>
        </authorList>
    </citation>
    <scope>NUCLEOTIDE SEQUENCE [LARGE SCALE GENOMIC DNA]</scope>
    <source>
        <strain>C57BL/6J</strain>
    </source>
</reference>
<reference key="3">
    <citation type="journal article" date="2004" name="Genome Res.">
        <title>The status, quality, and expansion of the NIH full-length cDNA project: the Mammalian Gene Collection (MGC).</title>
        <authorList>
            <consortium name="The MGC Project Team"/>
        </authorList>
    </citation>
    <scope>NUCLEOTIDE SEQUENCE [LARGE SCALE MRNA] (ISOFORMS 3 AND 4)</scope>
</reference>
<reference key="4">
    <citation type="journal article" date="2014" name="BMC Cell Biol.">
        <title>Mouse CCDC79 (TERB1) is a meiosis-specific telomere associated protein.</title>
        <authorList>
            <person name="Daniel K."/>
            <person name="Traenkner D."/>
            <person name="Wojtasz L."/>
            <person name="Shibuya H."/>
            <person name="Watanabe Y."/>
            <person name="Alsheimer M."/>
            <person name="Toth A."/>
        </authorList>
    </citation>
    <scope>FUNCTION</scope>
    <scope>SUBCELLULAR LOCATION</scope>
    <scope>DEVELOPMENTAL STAGE</scope>
</reference>
<reference key="5">
    <citation type="journal article" date="2014" name="Nat. Cell Biol.">
        <title>The TRF1-binding protein TERB1 promotes chromosome movement and telomere rigidity in meiosis.</title>
        <authorList>
            <person name="Shibuya H."/>
            <person name="Ishiguro K.I."/>
            <person name="Watanabe Y."/>
        </authorList>
    </citation>
    <scope>FUNCTION</scope>
    <scope>SUBCELLULAR LOCATION</scope>
    <scope>DISRUPTION PHENOTYPE</scope>
    <scope>PHOSPHORYLATION AT THR-648</scope>
    <scope>TISSUE SPECIFICITY</scope>
    <scope>DEVELOPMENTAL STAGE</scope>
    <scope>MUTAGENESIS OF THR-648</scope>
    <scope>INTERACTION WITH TERF1; STAG3 AND SUN1</scope>
</reference>
<reference key="6">
    <citation type="journal article" date="2015" name="Cell">
        <title>MAJIN links telomeric DNA to the nuclear membrane by exchanging telomere cap.</title>
        <authorList>
            <person name="Shibuya H."/>
            <person name="Hernandez-Hernandez A."/>
            <person name="Morimoto A."/>
            <person name="Negishi L."/>
            <person name="Hoeoeg C."/>
            <person name="Watanabe Y."/>
        </authorList>
    </citation>
    <scope>FUNCTION</scope>
    <scope>SUBCELLULAR LOCATION</scope>
    <scope>IDENTIFICATION IN THE MAJIN-TERB1-TERB2 COMPLEX</scope>
    <scope>PHOSPHORYLATION AT THR-648</scope>
    <scope>MUTAGENESIS OF THR-648</scope>
</reference>
<reference key="7">
    <citation type="submission" date="2005-11" db="PDB data bank">
        <title>Solution structures of the myb-like DNA binding domain of 4930532d21rik protein.</title>
        <authorList>
            <consortium name="RIKEN structural genomics initiative (RSGI)"/>
        </authorList>
    </citation>
    <scope>STRUCTURE BY NMR OF 712-764</scope>
</reference>
<protein>
    <recommendedName>
        <fullName evidence="8">Telomere repeats-binding bouquet formation protein 1</fullName>
    </recommendedName>
    <alternativeName>
        <fullName>Coiled-coil domain-containing protein 79</fullName>
    </alternativeName>
</protein>
<keyword id="KW-0002">3D-structure</keyword>
<keyword id="KW-0025">Alternative splicing</keyword>
<keyword id="KW-0158">Chromosome</keyword>
<keyword id="KW-0175">Coiled coil</keyword>
<keyword id="KW-0469">Meiosis</keyword>
<keyword id="KW-0472">Membrane</keyword>
<keyword id="KW-0539">Nucleus</keyword>
<keyword id="KW-0597">Phosphoprotein</keyword>
<keyword id="KW-1185">Reference proteome</keyword>
<keyword id="KW-0677">Repeat</keyword>
<keyword id="KW-0779">Telomere</keyword>
<evidence type="ECO:0000255" key="1"/>
<evidence type="ECO:0000256" key="2">
    <source>
        <dbReference type="SAM" id="MobiDB-lite"/>
    </source>
</evidence>
<evidence type="ECO:0000269" key="3">
    <source>
    </source>
</evidence>
<evidence type="ECO:0000269" key="4">
    <source>
    </source>
</evidence>
<evidence type="ECO:0000269" key="5">
    <source>
    </source>
</evidence>
<evidence type="ECO:0000303" key="6">
    <source>
    </source>
</evidence>
<evidence type="ECO:0000303" key="7">
    <source>
    </source>
</evidence>
<evidence type="ECO:0000303" key="8">
    <source>
    </source>
</evidence>
<evidence type="ECO:0000305" key="9"/>
<evidence type="ECO:0000305" key="10">
    <source>
    </source>
</evidence>
<evidence type="ECO:0000305" key="11">
    <source>
    </source>
</evidence>
<evidence type="ECO:0000312" key="12">
    <source>
        <dbReference type="MGI" id="MGI:2443187"/>
    </source>
</evidence>
<evidence type="ECO:0007829" key="13">
    <source>
        <dbReference type="PDB" id="1X58"/>
    </source>
</evidence>
<proteinExistence type="evidence at protein level"/>
<name>TERB1_MOUSE</name>
<gene>
    <name evidence="8" type="primary">Terb1</name>
    <name evidence="12" type="synonym">Ccdc79</name>
</gene>
<sequence>MESEKPKKTQEMKTDLKLLLECLKYHMGNPLSQKEVLITIHSVCKQNSDAGIYFREIGGLMFIINLAKSSEQSLVKEAALYTLGSIAEENVYCQQSLCTSELFQDLTGLLTNDDSNTNLKRMSVYVLLVLVSNNRNGQTLVREVGCIEVLSQMFRTVLSNYELNLSDNSVFQSYLLWSSVCSTLCVCVNNPQNDENQMLCCSLFPCVNEWLMNCMRPEVIRPICSFIGLTLANNTHAQNCFVSSGGLDVLCQVLVQLESDSHNTLSSAKLAVIVTKTMDACITDNSAAFTVVLSKYHIVSTLLALLLHESLDSREKFSIILAIGHCTEDCEKNQYELLKNNGLPLMIQALTEFKNEDLSKAATYVLHNCKKITGKLSLSLGQNSFGENEIELKDISEKETLREHWKAAKEILCRIKQFEKGGKEEKQQNRSGHYKDNTPSMKVNIQTNLKRLCADSTGGTRAEDKDINQSRELRSYKPSEIMSKACANENQLTTRKKNTNPVHPFCKEKGQSKIVHETTPSCAQNLDKEKTFDQKDSVSQSSDQVLKHLPHTVKNRKQVPETDPFTLCLDIIDREVGIQATDSCSRMLKYTCSGCIVARKLLNSRNFSKFLHSCAYQCVHHKVIMEAEDKYKNELRKTFICAKKILLTPCRRRQLCKESTASEELKIVHQKPDSKKLPGLEAQALNTSIPEAMERRSPVPGQSGLHKKRRIRKDFTKEEVNYLFHGVKTMGNHWNSILWSFPFQKGRRAVDLAHKYHRLIKGPSCAAL</sequence>